<dbReference type="EMBL" id="CP000300">
    <property type="protein sequence ID" value="ABE53214.1"/>
    <property type="molecule type" value="Genomic_DNA"/>
</dbReference>
<dbReference type="RefSeq" id="WP_011500349.1">
    <property type="nucleotide sequence ID" value="NC_007955.1"/>
</dbReference>
<dbReference type="SMR" id="Q12TL2"/>
<dbReference type="STRING" id="259564.Mbur_2361"/>
<dbReference type="GeneID" id="3998948"/>
<dbReference type="KEGG" id="mbu:Mbur_2361"/>
<dbReference type="HOGENOM" id="CLU_019250_2_2_2"/>
<dbReference type="OrthoDB" id="53136at2157"/>
<dbReference type="UniPathway" id="UPA00148"/>
<dbReference type="Proteomes" id="UP000001979">
    <property type="component" value="Chromosome"/>
</dbReference>
<dbReference type="GO" id="GO:0015420">
    <property type="term" value="F:ABC-type vitamin B12 transporter activity"/>
    <property type="evidence" value="ECO:0007669"/>
    <property type="project" value="UniProtKB-UniRule"/>
</dbReference>
<dbReference type="GO" id="GO:0003824">
    <property type="term" value="F:catalytic activity"/>
    <property type="evidence" value="ECO:0007669"/>
    <property type="project" value="InterPro"/>
</dbReference>
<dbReference type="GO" id="GO:0009236">
    <property type="term" value="P:cobalamin biosynthetic process"/>
    <property type="evidence" value="ECO:0007669"/>
    <property type="project" value="UniProtKB-UniRule"/>
</dbReference>
<dbReference type="CDD" id="cd05389">
    <property type="entry name" value="CobQ_N"/>
    <property type="match status" value="1"/>
</dbReference>
<dbReference type="CDD" id="cd01750">
    <property type="entry name" value="GATase1_CobQ"/>
    <property type="match status" value="1"/>
</dbReference>
<dbReference type="Gene3D" id="3.40.50.880">
    <property type="match status" value="1"/>
</dbReference>
<dbReference type="Gene3D" id="3.40.50.300">
    <property type="entry name" value="P-loop containing nucleotide triphosphate hydrolases"/>
    <property type="match status" value="1"/>
</dbReference>
<dbReference type="HAMAP" id="MF_00028">
    <property type="entry name" value="CobQ"/>
    <property type="match status" value="1"/>
</dbReference>
<dbReference type="InterPro" id="IPR029062">
    <property type="entry name" value="Class_I_gatase-like"/>
</dbReference>
<dbReference type="InterPro" id="IPR002586">
    <property type="entry name" value="CobQ/CobB/MinD/ParA_Nub-bd_dom"/>
</dbReference>
<dbReference type="InterPro" id="IPR033949">
    <property type="entry name" value="CobQ_GATase1"/>
</dbReference>
<dbReference type="InterPro" id="IPR047045">
    <property type="entry name" value="CobQ_N"/>
</dbReference>
<dbReference type="InterPro" id="IPR004459">
    <property type="entry name" value="CobQ_synth"/>
</dbReference>
<dbReference type="InterPro" id="IPR011698">
    <property type="entry name" value="GATase_3"/>
</dbReference>
<dbReference type="InterPro" id="IPR027417">
    <property type="entry name" value="P-loop_NTPase"/>
</dbReference>
<dbReference type="NCBIfam" id="TIGR00313">
    <property type="entry name" value="cobQ"/>
    <property type="match status" value="1"/>
</dbReference>
<dbReference type="NCBIfam" id="NF001989">
    <property type="entry name" value="PRK00784.1"/>
    <property type="match status" value="1"/>
</dbReference>
<dbReference type="PANTHER" id="PTHR21343:SF1">
    <property type="entry name" value="COBYRIC ACID SYNTHASE"/>
    <property type="match status" value="1"/>
</dbReference>
<dbReference type="PANTHER" id="PTHR21343">
    <property type="entry name" value="DETHIOBIOTIN SYNTHETASE"/>
    <property type="match status" value="1"/>
</dbReference>
<dbReference type="Pfam" id="PF01656">
    <property type="entry name" value="CbiA"/>
    <property type="match status" value="1"/>
</dbReference>
<dbReference type="Pfam" id="PF07685">
    <property type="entry name" value="GATase_3"/>
    <property type="match status" value="1"/>
</dbReference>
<dbReference type="SUPFAM" id="SSF52317">
    <property type="entry name" value="Class I glutamine amidotransferase-like"/>
    <property type="match status" value="1"/>
</dbReference>
<dbReference type="SUPFAM" id="SSF52540">
    <property type="entry name" value="P-loop containing nucleoside triphosphate hydrolases"/>
    <property type="match status" value="1"/>
</dbReference>
<dbReference type="PROSITE" id="PS51274">
    <property type="entry name" value="GATASE_COBBQ"/>
    <property type="match status" value="1"/>
</dbReference>
<keyword id="KW-0169">Cobalamin biosynthesis</keyword>
<keyword id="KW-0315">Glutamine amidotransferase</keyword>
<evidence type="ECO:0000255" key="1">
    <source>
        <dbReference type="HAMAP-Rule" id="MF_00028"/>
    </source>
</evidence>
<organism>
    <name type="scientific">Methanococcoides burtonii (strain DSM 6242 / NBRC 107633 / OCM 468 / ACE-M)</name>
    <dbReference type="NCBI Taxonomy" id="259564"/>
    <lineage>
        <taxon>Archaea</taxon>
        <taxon>Methanobacteriati</taxon>
        <taxon>Methanobacteriota</taxon>
        <taxon>Stenosarchaea group</taxon>
        <taxon>Methanomicrobia</taxon>
        <taxon>Methanosarcinales</taxon>
        <taxon>Methanosarcinaceae</taxon>
        <taxon>Methanococcoides</taxon>
    </lineage>
</organism>
<comment type="function">
    <text evidence="1">Catalyzes amidations at positions B, D, E, and G on adenosylcobyrinic A,C-diamide. NH(2) groups are provided by glutamine, and one molecule of ATP is hydrogenolyzed for each amidation.</text>
</comment>
<comment type="pathway">
    <text evidence="1">Cofactor biosynthesis; adenosylcobalamin biosynthesis.</text>
</comment>
<comment type="similarity">
    <text evidence="1">Belongs to the CobB/CobQ family. CobQ subfamily.</text>
</comment>
<accession>Q12TL2</accession>
<name>COBQ_METBU</name>
<feature type="chain" id="PRO_0000332402" description="Probable cobyric acid synthase">
    <location>
        <begin position="1"/>
        <end position="495"/>
    </location>
</feature>
<feature type="domain" description="GATase cobBQ-type" evidence="1">
    <location>
        <begin position="256"/>
        <end position="441"/>
    </location>
</feature>
<feature type="active site" description="Nucleophile" evidence="1">
    <location>
        <position position="334"/>
    </location>
</feature>
<feature type="active site" evidence="1">
    <location>
        <position position="433"/>
    </location>
</feature>
<gene>
    <name evidence="1" type="primary">cobQ</name>
    <name type="ordered locus">Mbur_2361</name>
</gene>
<protein>
    <recommendedName>
        <fullName evidence="1">Probable cobyric acid synthase</fullName>
    </recommendedName>
</protein>
<proteinExistence type="inferred from homology"/>
<reference key="1">
    <citation type="journal article" date="2009" name="ISME J.">
        <title>The genome sequence of the psychrophilic archaeon, Methanococcoides burtonii: the role of genome evolution in cold adaptation.</title>
        <authorList>
            <person name="Allen M.A."/>
            <person name="Lauro F.M."/>
            <person name="Williams T.J."/>
            <person name="Burg D."/>
            <person name="Siddiqui K.S."/>
            <person name="De Francisci D."/>
            <person name="Chong K.W."/>
            <person name="Pilak O."/>
            <person name="Chew H.H."/>
            <person name="De Maere M.Z."/>
            <person name="Ting L."/>
            <person name="Katrib M."/>
            <person name="Ng C."/>
            <person name="Sowers K.R."/>
            <person name="Galperin M.Y."/>
            <person name="Anderson I.J."/>
            <person name="Ivanova N."/>
            <person name="Dalin E."/>
            <person name="Martinez M."/>
            <person name="Lapidus A."/>
            <person name="Hauser L."/>
            <person name="Land M."/>
            <person name="Thomas T."/>
            <person name="Cavicchioli R."/>
        </authorList>
    </citation>
    <scope>NUCLEOTIDE SEQUENCE [LARGE SCALE GENOMIC DNA]</scope>
    <source>
        <strain>DSM 6242 / NBRC 107633 / OCM 468 / ACE-M</strain>
    </source>
</reference>
<sequence>MTANNANKKHLLVLGTASHVGKSAIVTALCRIFSADHKVAPFKAQNMSLNSWITVDGKEIGIAQAIQAKAAGVEPTADMNPVLLKPKGDRVSQVILLGEPYADKSAGAYYDSIEETHDVLKGALKRLEAEYDLIVMEGAGGAAEINLYDRDIVNIGTARITDAPIILVGDIERGGVFASLYGTIQLLPEDVRKNVRGLIINKFRGDPAILESGLTELEELTGIPVLGVMPYFKLRIPSEDSVSIGDKSADDGEHYDVDIAVIRLTRISNFTDFEPLEHMAKVRYVDLSDDLGNPDAIIIPGTKNTTSDLNDLVESGMADKIKSFYGMVPILGICGGYQMLGKSIVDSGIEGGESARLDGLGLLDIETVFDAYEKRTVQVTKTVKESGPIFDSIKGEDVKGYEIHMGISSSKRPVFGDDGCADDSGLVIGTYLHGLFDNVNIRRALISYLLEKKGLEFKEEEIPDKDPYDELADVARENLDMNKIYGMIGLEPEKV</sequence>